<dbReference type="EMBL" id="X76767">
    <property type="protein sequence ID" value="CAA54160.1"/>
    <property type="molecule type" value="Genomic_DNA"/>
</dbReference>
<dbReference type="EMBL" id="AE006641">
    <property type="protein sequence ID" value="AAK40562.1"/>
    <property type="status" value="ALT_INIT"/>
    <property type="molecule type" value="Genomic_DNA"/>
</dbReference>
<dbReference type="PIR" id="C90163">
    <property type="entry name" value="C90163"/>
</dbReference>
<dbReference type="PIR" id="T11745">
    <property type="entry name" value="T11745"/>
</dbReference>
<dbReference type="PDB" id="9FHL">
    <property type="method" value="EM"/>
    <property type="resolution" value="2.50 A"/>
    <property type="chains" value="N=1-147"/>
</dbReference>
<dbReference type="PDB" id="9FRA">
    <property type="method" value="EM"/>
    <property type="resolution" value="2.80 A"/>
    <property type="chains" value="N=1-147"/>
</dbReference>
<dbReference type="PDB" id="9FRK">
    <property type="method" value="EM"/>
    <property type="resolution" value="3.00 A"/>
    <property type="chains" value="N=1-147"/>
</dbReference>
<dbReference type="PDB" id="9FRL">
    <property type="method" value="EM"/>
    <property type="resolution" value="2.97 A"/>
    <property type="chains" value="N=1-147"/>
</dbReference>
<dbReference type="PDB" id="9FS6">
    <property type="method" value="EM"/>
    <property type="resolution" value="2.90 A"/>
    <property type="chains" value="N=1-147"/>
</dbReference>
<dbReference type="PDB" id="9FS8">
    <property type="method" value="EM"/>
    <property type="resolution" value="3.70 A"/>
    <property type="chains" value="N=1-147"/>
</dbReference>
<dbReference type="PDB" id="9FSF">
    <property type="method" value="EM"/>
    <property type="resolution" value="2.80 A"/>
    <property type="chains" value="N=1-147"/>
</dbReference>
<dbReference type="PDB" id="9FY0">
    <property type="method" value="EM"/>
    <property type="resolution" value="2.90 A"/>
    <property type="chains" value="N=1-147"/>
</dbReference>
<dbReference type="PDBsum" id="9FHL"/>
<dbReference type="PDBsum" id="9FRA"/>
<dbReference type="PDBsum" id="9FRK"/>
<dbReference type="PDBsum" id="9FRL"/>
<dbReference type="PDBsum" id="9FS6"/>
<dbReference type="PDBsum" id="9FS8"/>
<dbReference type="PDBsum" id="9FSF"/>
<dbReference type="PDBsum" id="9FY0"/>
<dbReference type="EMDB" id="EMD-50445"/>
<dbReference type="EMDB" id="EMD-50709"/>
<dbReference type="EMDB" id="EMD-50716"/>
<dbReference type="EMDB" id="EMD-50717"/>
<dbReference type="EMDB" id="EMD-50724"/>
<dbReference type="EMDB" id="EMD-50725"/>
<dbReference type="EMDB" id="EMD-50727"/>
<dbReference type="EMDB" id="EMD-50854"/>
<dbReference type="SMR" id="P39573"/>
<dbReference type="FunCoup" id="P39573">
    <property type="interactions" value="207"/>
</dbReference>
<dbReference type="STRING" id="273057.SSO0219"/>
<dbReference type="PaxDb" id="273057-SSO0219"/>
<dbReference type="EnsemblBacteria" id="AAK40562">
    <property type="protein sequence ID" value="AAK40562"/>
    <property type="gene ID" value="SSO0219"/>
</dbReference>
<dbReference type="KEGG" id="sso:SSO0219"/>
<dbReference type="PATRIC" id="fig|273057.12.peg.217"/>
<dbReference type="eggNOG" id="arCOG04255">
    <property type="taxonomic scope" value="Archaea"/>
</dbReference>
<dbReference type="HOGENOM" id="CLU_115574_0_1_2"/>
<dbReference type="InParanoid" id="P39573"/>
<dbReference type="PhylomeDB" id="P39573"/>
<dbReference type="Proteomes" id="UP000001974">
    <property type="component" value="Chromosome"/>
</dbReference>
<dbReference type="GO" id="GO:0022627">
    <property type="term" value="C:cytosolic small ribosomal subunit"/>
    <property type="evidence" value="ECO:0000318"/>
    <property type="project" value="GO_Central"/>
</dbReference>
<dbReference type="GO" id="GO:0005840">
    <property type="term" value="C:ribosome"/>
    <property type="evidence" value="ECO:0000318"/>
    <property type="project" value="GO_Central"/>
</dbReference>
<dbReference type="GO" id="GO:0019843">
    <property type="term" value="F:rRNA binding"/>
    <property type="evidence" value="ECO:0007669"/>
    <property type="project" value="UniProtKB-UniRule"/>
</dbReference>
<dbReference type="GO" id="GO:0003735">
    <property type="term" value="F:structural constituent of ribosome"/>
    <property type="evidence" value="ECO:0000318"/>
    <property type="project" value="GO_Central"/>
</dbReference>
<dbReference type="GO" id="GO:0006412">
    <property type="term" value="P:translation"/>
    <property type="evidence" value="ECO:0000318"/>
    <property type="project" value="GO_Central"/>
</dbReference>
<dbReference type="CDD" id="cd03367">
    <property type="entry name" value="Ribosomal_S23"/>
    <property type="match status" value="1"/>
</dbReference>
<dbReference type="FunFam" id="2.40.50.140:FF:000007">
    <property type="entry name" value="40S ribosomal protein S23"/>
    <property type="match status" value="1"/>
</dbReference>
<dbReference type="Gene3D" id="2.40.50.140">
    <property type="entry name" value="Nucleic acid-binding proteins"/>
    <property type="match status" value="1"/>
</dbReference>
<dbReference type="HAMAP" id="MF_00403_A">
    <property type="entry name" value="Ribosomal_uS12_A"/>
    <property type="match status" value="1"/>
</dbReference>
<dbReference type="InterPro" id="IPR012340">
    <property type="entry name" value="NA-bd_OB-fold"/>
</dbReference>
<dbReference type="InterPro" id="IPR006032">
    <property type="entry name" value="Ribosomal_uS12"/>
</dbReference>
<dbReference type="InterPro" id="IPR022863">
    <property type="entry name" value="Ribosomal_uS12_arc"/>
</dbReference>
<dbReference type="InterPro" id="IPR005680">
    <property type="entry name" value="Ribosomal_uS12_euk/arc"/>
</dbReference>
<dbReference type="NCBIfam" id="NF003254">
    <property type="entry name" value="PRK04211.1"/>
    <property type="match status" value="1"/>
</dbReference>
<dbReference type="NCBIfam" id="TIGR00982">
    <property type="entry name" value="uS12_E_A"/>
    <property type="match status" value="1"/>
</dbReference>
<dbReference type="PANTHER" id="PTHR11652">
    <property type="entry name" value="30S RIBOSOMAL PROTEIN S12 FAMILY MEMBER"/>
    <property type="match status" value="1"/>
</dbReference>
<dbReference type="Pfam" id="PF00164">
    <property type="entry name" value="Ribosom_S12_S23"/>
    <property type="match status" value="1"/>
</dbReference>
<dbReference type="PIRSF" id="PIRSF002133">
    <property type="entry name" value="Ribosomal_S12/S23"/>
    <property type="match status" value="1"/>
</dbReference>
<dbReference type="SUPFAM" id="SSF50249">
    <property type="entry name" value="Nucleic acid-binding proteins"/>
    <property type="match status" value="1"/>
</dbReference>
<dbReference type="PROSITE" id="PS00055">
    <property type="entry name" value="RIBOSOMAL_S12"/>
    <property type="match status" value="1"/>
</dbReference>
<feature type="chain" id="PRO_0000146382" description="Small ribosomal subunit protein uS12">
    <location>
        <begin position="1"/>
        <end position="147"/>
    </location>
</feature>
<feature type="sequence variant" description="In strain: MT-4.">
    <original>V</original>
    <variation>S</variation>
    <location>
        <position position="2"/>
    </location>
</feature>
<feature type="sequence variant" description="In strain: MT-4.">
    <original>P</original>
    <variation>S</variation>
    <location>
        <position position="7"/>
    </location>
</feature>
<feature type="sequence variant" description="In strain: MT-4.">
    <original>A</original>
    <variation>S</variation>
    <location>
        <position position="12"/>
    </location>
</feature>
<feature type="sequence variant" description="In strain: MT-4.">
    <original>D</original>
    <variation>N</variation>
    <location>
        <position position="42"/>
    </location>
</feature>
<feature type="sequence variant" description="In strain: MT-4.">
    <original>MV</original>
    <variation>NG</variation>
    <location>
        <begin position="128"/>
        <end position="129"/>
    </location>
</feature>
<proteinExistence type="evidence at protein level"/>
<evidence type="ECO:0000255" key="1">
    <source>
        <dbReference type="HAMAP-Rule" id="MF_00403"/>
    </source>
</evidence>
<evidence type="ECO:0000305" key="2"/>
<protein>
    <recommendedName>
        <fullName evidence="1">Small ribosomal subunit protein uS12</fullName>
    </recommendedName>
    <alternativeName>
        <fullName evidence="2">30S ribosomal protein S12</fullName>
    </alternativeName>
</protein>
<comment type="function">
    <text evidence="1">With S4 and S5 plays an important role in translational accuracy. Located at the interface of the 30S and 50S subunits.</text>
</comment>
<comment type="subunit">
    <text evidence="1">Part of the 30S ribosomal subunit.</text>
</comment>
<comment type="similarity">
    <text evidence="1">Belongs to the universal ribosomal protein uS12 family.</text>
</comment>
<comment type="sequence caution" evidence="2">
    <conflict type="erroneous initiation">
        <sequence resource="EMBL-CDS" id="AAK40562"/>
    </conflict>
    <text>Extended N-terminus.</text>
</comment>
<sequence length="147" mass="16346">MVKSKSPKGIYAARKLRLKRLKFRRSQRKYKTKILKLKEKYDPLGGAPMARGIVLEKVGIESRQPNSAVRKCVRVQLVRNGRVVTAFVPGDGGVNFIDEHDEVIITGIGGTLGRSMGDLPGVRYKVIMVNGVSLDALYKGKKQKPVR</sequence>
<keyword id="KW-0002">3D-structure</keyword>
<keyword id="KW-1185">Reference proteome</keyword>
<keyword id="KW-0687">Ribonucleoprotein</keyword>
<keyword id="KW-0689">Ribosomal protein</keyword>
<keyword id="KW-0694">RNA-binding</keyword>
<keyword id="KW-0699">rRNA-binding</keyword>
<reference key="1">
    <citation type="journal article" date="1994" name="Biochim. Biophys. Acta">
        <title>The nucleotide sequence of the gene coding for the elongation factor 1 alpha in Sulfolobus solfataricus. Homology of the product with related proteins.</title>
        <authorList>
            <person name="Arcari P."/>
            <person name="Gallo M."/>
            <person name="Ianniciello G."/>
            <person name="Dello Russo A."/>
            <person name="Bocchini V."/>
        </authorList>
    </citation>
    <scope>NUCLEOTIDE SEQUENCE [GENOMIC DNA]</scope>
    <source>
        <strain>DSM 5833 / MT-4</strain>
    </source>
</reference>
<reference key="2">
    <citation type="journal article" date="2001" name="Proc. Natl. Acad. Sci. U.S.A.">
        <title>The complete genome of the crenarchaeon Sulfolobus solfataricus P2.</title>
        <authorList>
            <person name="She Q."/>
            <person name="Singh R.K."/>
            <person name="Confalonieri F."/>
            <person name="Zivanovic Y."/>
            <person name="Allard G."/>
            <person name="Awayez M.J."/>
            <person name="Chan-Weiher C.C.-Y."/>
            <person name="Clausen I.G."/>
            <person name="Curtis B.A."/>
            <person name="De Moors A."/>
            <person name="Erauso G."/>
            <person name="Fletcher C."/>
            <person name="Gordon P.M.K."/>
            <person name="Heikamp-de Jong I."/>
            <person name="Jeffries A.C."/>
            <person name="Kozera C.J."/>
            <person name="Medina N."/>
            <person name="Peng X."/>
            <person name="Thi-Ngoc H.P."/>
            <person name="Redder P."/>
            <person name="Schenk M.E."/>
            <person name="Theriault C."/>
            <person name="Tolstrup N."/>
            <person name="Charlebois R.L."/>
            <person name="Doolittle W.F."/>
            <person name="Duguet M."/>
            <person name="Gaasterland T."/>
            <person name="Garrett R.A."/>
            <person name="Ragan M.A."/>
            <person name="Sensen C.W."/>
            <person name="Van der Oost J."/>
        </authorList>
    </citation>
    <scope>NUCLEOTIDE SEQUENCE [LARGE SCALE GENOMIC DNA]</scope>
    <source>
        <strain>ATCC 35092 / DSM 1617 / JCM 11322 / P2</strain>
    </source>
</reference>
<accession>P39573</accession>
<name>RS12_SACS2</name>
<organism>
    <name type="scientific">Saccharolobus solfataricus (strain ATCC 35092 / DSM 1617 / JCM 11322 / P2)</name>
    <name type="common">Sulfolobus solfataricus</name>
    <dbReference type="NCBI Taxonomy" id="273057"/>
    <lineage>
        <taxon>Archaea</taxon>
        <taxon>Thermoproteota</taxon>
        <taxon>Thermoprotei</taxon>
        <taxon>Sulfolobales</taxon>
        <taxon>Sulfolobaceae</taxon>
        <taxon>Saccharolobus</taxon>
    </lineage>
</organism>
<gene>
    <name evidence="1" type="primary">rps12</name>
    <name evidence="1" type="synonym">rps12Ab</name>
    <name type="ordered locus">SSO0219</name>
</gene>